<dbReference type="EC" id="3.6.4.-" evidence="1"/>
<dbReference type="EMBL" id="CU459141">
    <property type="protein sequence ID" value="CAM85854.1"/>
    <property type="molecule type" value="Genomic_DNA"/>
</dbReference>
<dbReference type="RefSeq" id="WP_001154002.1">
    <property type="nucleotide sequence ID" value="NZ_JBDGFB010000021.1"/>
</dbReference>
<dbReference type="SMR" id="B0VDI5"/>
<dbReference type="EnsemblBacteria" id="CAM85854">
    <property type="protein sequence ID" value="CAM85854"/>
    <property type="gene ID" value="ABAYE0909"/>
</dbReference>
<dbReference type="GeneID" id="92894861"/>
<dbReference type="KEGG" id="aby:ABAYE0909"/>
<dbReference type="HOGENOM" id="CLU_055599_1_0_6"/>
<dbReference type="GO" id="GO:0005737">
    <property type="term" value="C:cytoplasm"/>
    <property type="evidence" value="ECO:0007669"/>
    <property type="project" value="UniProtKB-SubCell"/>
</dbReference>
<dbReference type="GO" id="GO:0048476">
    <property type="term" value="C:Holliday junction resolvase complex"/>
    <property type="evidence" value="ECO:0007669"/>
    <property type="project" value="UniProtKB-UniRule"/>
</dbReference>
<dbReference type="GO" id="GO:0005524">
    <property type="term" value="F:ATP binding"/>
    <property type="evidence" value="ECO:0007669"/>
    <property type="project" value="UniProtKB-UniRule"/>
</dbReference>
<dbReference type="GO" id="GO:0016887">
    <property type="term" value="F:ATP hydrolysis activity"/>
    <property type="evidence" value="ECO:0007669"/>
    <property type="project" value="InterPro"/>
</dbReference>
<dbReference type="GO" id="GO:0000400">
    <property type="term" value="F:four-way junction DNA binding"/>
    <property type="evidence" value="ECO:0007669"/>
    <property type="project" value="UniProtKB-UniRule"/>
</dbReference>
<dbReference type="GO" id="GO:0009378">
    <property type="term" value="F:four-way junction helicase activity"/>
    <property type="evidence" value="ECO:0007669"/>
    <property type="project" value="InterPro"/>
</dbReference>
<dbReference type="GO" id="GO:0006310">
    <property type="term" value="P:DNA recombination"/>
    <property type="evidence" value="ECO:0007669"/>
    <property type="project" value="UniProtKB-UniRule"/>
</dbReference>
<dbReference type="GO" id="GO:0006281">
    <property type="term" value="P:DNA repair"/>
    <property type="evidence" value="ECO:0007669"/>
    <property type="project" value="UniProtKB-UniRule"/>
</dbReference>
<dbReference type="CDD" id="cd00009">
    <property type="entry name" value="AAA"/>
    <property type="match status" value="1"/>
</dbReference>
<dbReference type="FunFam" id="1.10.8.60:FF:000023">
    <property type="entry name" value="Holliday junction ATP-dependent DNA helicase RuvB"/>
    <property type="match status" value="1"/>
</dbReference>
<dbReference type="FunFam" id="3.40.50.300:FF:000073">
    <property type="entry name" value="Holliday junction ATP-dependent DNA helicase RuvB"/>
    <property type="match status" value="1"/>
</dbReference>
<dbReference type="Gene3D" id="1.10.8.60">
    <property type="match status" value="1"/>
</dbReference>
<dbReference type="Gene3D" id="3.40.50.300">
    <property type="entry name" value="P-loop containing nucleotide triphosphate hydrolases"/>
    <property type="match status" value="1"/>
</dbReference>
<dbReference type="Gene3D" id="1.10.10.10">
    <property type="entry name" value="Winged helix-like DNA-binding domain superfamily/Winged helix DNA-binding domain"/>
    <property type="match status" value="1"/>
</dbReference>
<dbReference type="HAMAP" id="MF_00016">
    <property type="entry name" value="DNA_HJ_migration_RuvB"/>
    <property type="match status" value="1"/>
</dbReference>
<dbReference type="InterPro" id="IPR003593">
    <property type="entry name" value="AAA+_ATPase"/>
</dbReference>
<dbReference type="InterPro" id="IPR041445">
    <property type="entry name" value="AAA_lid_4"/>
</dbReference>
<dbReference type="InterPro" id="IPR004605">
    <property type="entry name" value="DNA_helicase_Holl-junc_RuvB"/>
</dbReference>
<dbReference type="InterPro" id="IPR027417">
    <property type="entry name" value="P-loop_NTPase"/>
</dbReference>
<dbReference type="InterPro" id="IPR008824">
    <property type="entry name" value="RuvB-like_N"/>
</dbReference>
<dbReference type="InterPro" id="IPR008823">
    <property type="entry name" value="RuvB_C"/>
</dbReference>
<dbReference type="InterPro" id="IPR036388">
    <property type="entry name" value="WH-like_DNA-bd_sf"/>
</dbReference>
<dbReference type="InterPro" id="IPR036390">
    <property type="entry name" value="WH_DNA-bd_sf"/>
</dbReference>
<dbReference type="NCBIfam" id="NF000868">
    <property type="entry name" value="PRK00080.1"/>
    <property type="match status" value="1"/>
</dbReference>
<dbReference type="NCBIfam" id="TIGR00635">
    <property type="entry name" value="ruvB"/>
    <property type="match status" value="1"/>
</dbReference>
<dbReference type="PANTHER" id="PTHR42848">
    <property type="match status" value="1"/>
</dbReference>
<dbReference type="PANTHER" id="PTHR42848:SF1">
    <property type="entry name" value="HOLLIDAY JUNCTION BRANCH MIGRATION COMPLEX SUBUNIT RUVB"/>
    <property type="match status" value="1"/>
</dbReference>
<dbReference type="Pfam" id="PF17864">
    <property type="entry name" value="AAA_lid_4"/>
    <property type="match status" value="1"/>
</dbReference>
<dbReference type="Pfam" id="PF05491">
    <property type="entry name" value="RuvB_C"/>
    <property type="match status" value="1"/>
</dbReference>
<dbReference type="Pfam" id="PF05496">
    <property type="entry name" value="RuvB_N"/>
    <property type="match status" value="1"/>
</dbReference>
<dbReference type="SMART" id="SM00382">
    <property type="entry name" value="AAA"/>
    <property type="match status" value="1"/>
</dbReference>
<dbReference type="SUPFAM" id="SSF52540">
    <property type="entry name" value="P-loop containing nucleoside triphosphate hydrolases"/>
    <property type="match status" value="1"/>
</dbReference>
<dbReference type="SUPFAM" id="SSF46785">
    <property type="entry name" value="Winged helix' DNA-binding domain"/>
    <property type="match status" value="1"/>
</dbReference>
<feature type="chain" id="PRO_1000089611" description="Holliday junction branch migration complex subunit RuvB">
    <location>
        <begin position="1"/>
        <end position="334"/>
    </location>
</feature>
<feature type="region of interest" description="Large ATPase domain (RuvB-L)" evidence="1">
    <location>
        <begin position="1"/>
        <end position="181"/>
    </location>
</feature>
<feature type="region of interest" description="Small ATPAse domain (RuvB-S)" evidence="1">
    <location>
        <begin position="182"/>
        <end position="252"/>
    </location>
</feature>
<feature type="region of interest" description="Head domain (RuvB-H)" evidence="1">
    <location>
        <begin position="255"/>
        <end position="334"/>
    </location>
</feature>
<feature type="binding site" evidence="1">
    <location>
        <position position="20"/>
    </location>
    <ligand>
        <name>ATP</name>
        <dbReference type="ChEBI" id="CHEBI:30616"/>
    </ligand>
</feature>
<feature type="binding site" evidence="1">
    <location>
        <position position="21"/>
    </location>
    <ligand>
        <name>ATP</name>
        <dbReference type="ChEBI" id="CHEBI:30616"/>
    </ligand>
</feature>
<feature type="binding site" evidence="1">
    <location>
        <position position="62"/>
    </location>
    <ligand>
        <name>ATP</name>
        <dbReference type="ChEBI" id="CHEBI:30616"/>
    </ligand>
</feature>
<feature type="binding site" evidence="1">
    <location>
        <position position="65"/>
    </location>
    <ligand>
        <name>ATP</name>
        <dbReference type="ChEBI" id="CHEBI:30616"/>
    </ligand>
</feature>
<feature type="binding site" evidence="1">
    <location>
        <position position="66"/>
    </location>
    <ligand>
        <name>ATP</name>
        <dbReference type="ChEBI" id="CHEBI:30616"/>
    </ligand>
</feature>
<feature type="binding site" evidence="1">
    <location>
        <position position="66"/>
    </location>
    <ligand>
        <name>Mg(2+)</name>
        <dbReference type="ChEBI" id="CHEBI:18420"/>
    </ligand>
</feature>
<feature type="binding site" evidence="1">
    <location>
        <position position="67"/>
    </location>
    <ligand>
        <name>ATP</name>
        <dbReference type="ChEBI" id="CHEBI:30616"/>
    </ligand>
</feature>
<feature type="binding site" evidence="1">
    <location>
        <begin position="128"/>
        <end position="130"/>
    </location>
    <ligand>
        <name>ATP</name>
        <dbReference type="ChEBI" id="CHEBI:30616"/>
    </ligand>
</feature>
<feature type="binding site" evidence="1">
    <location>
        <position position="171"/>
    </location>
    <ligand>
        <name>ATP</name>
        <dbReference type="ChEBI" id="CHEBI:30616"/>
    </ligand>
</feature>
<feature type="binding site" evidence="1">
    <location>
        <position position="181"/>
    </location>
    <ligand>
        <name>ATP</name>
        <dbReference type="ChEBI" id="CHEBI:30616"/>
    </ligand>
</feature>
<feature type="binding site" evidence="1">
    <location>
        <position position="218"/>
    </location>
    <ligand>
        <name>ATP</name>
        <dbReference type="ChEBI" id="CHEBI:30616"/>
    </ligand>
</feature>
<feature type="binding site" evidence="1">
    <location>
        <position position="310"/>
    </location>
    <ligand>
        <name>DNA</name>
        <dbReference type="ChEBI" id="CHEBI:16991"/>
    </ligand>
</feature>
<feature type="binding site" evidence="1">
    <location>
        <position position="315"/>
    </location>
    <ligand>
        <name>DNA</name>
        <dbReference type="ChEBI" id="CHEBI:16991"/>
    </ligand>
</feature>
<comment type="function">
    <text evidence="1">The RuvA-RuvB-RuvC complex processes Holliday junction (HJ) DNA during genetic recombination and DNA repair, while the RuvA-RuvB complex plays an important role in the rescue of blocked DNA replication forks via replication fork reversal (RFR). RuvA specifically binds to HJ cruciform DNA, conferring on it an open structure. The RuvB hexamer acts as an ATP-dependent pump, pulling dsDNA into and through the RuvAB complex. RuvB forms 2 homohexamers on either side of HJ DNA bound by 1 or 2 RuvA tetramers; 4 subunits per hexamer contact DNA at a time. Coordinated motions by a converter formed by DNA-disengaged RuvB subunits stimulates ATP hydrolysis and nucleotide exchange. Immobilization of the converter enables RuvB to convert the ATP-contained energy into a lever motion, pulling 2 nucleotides of DNA out of the RuvA tetramer per ATP hydrolyzed, thus driving DNA branch migration. The RuvB motors rotate together with the DNA substrate, which together with the progressing nucleotide cycle form the mechanistic basis for DNA recombination by continuous HJ branch migration. Branch migration allows RuvC to scan DNA until it finds its consensus sequence, where it cleaves and resolves cruciform DNA.</text>
</comment>
<comment type="catalytic activity">
    <reaction evidence="1">
        <text>ATP + H2O = ADP + phosphate + H(+)</text>
        <dbReference type="Rhea" id="RHEA:13065"/>
        <dbReference type="ChEBI" id="CHEBI:15377"/>
        <dbReference type="ChEBI" id="CHEBI:15378"/>
        <dbReference type="ChEBI" id="CHEBI:30616"/>
        <dbReference type="ChEBI" id="CHEBI:43474"/>
        <dbReference type="ChEBI" id="CHEBI:456216"/>
    </reaction>
</comment>
<comment type="subunit">
    <text evidence="1">Homohexamer. Forms an RuvA(8)-RuvB(12)-Holliday junction (HJ) complex. HJ DNA is sandwiched between 2 RuvA tetramers; dsDNA enters through RuvA and exits via RuvB. An RuvB hexamer assembles on each DNA strand where it exits the tetramer. Each RuvB hexamer is contacted by two RuvA subunits (via domain III) on 2 adjacent RuvB subunits; this complex drives branch migration. In the full resolvosome a probable DNA-RuvA(4)-RuvB(12)-RuvC(2) complex forms which resolves the HJ.</text>
</comment>
<comment type="subcellular location">
    <subcellularLocation>
        <location evidence="1">Cytoplasm</location>
    </subcellularLocation>
</comment>
<comment type="domain">
    <text evidence="1">Has 3 domains, the large (RuvB-L) and small ATPase (RuvB-S) domains and the C-terminal head (RuvB-H) domain. The head domain binds DNA, while the ATPase domains jointly bind ATP, ADP or are empty depending on the state of the subunit in the translocation cycle. During a single DNA translocation step the structure of each domain remains the same, but their relative positions change.</text>
</comment>
<comment type="similarity">
    <text evidence="1">Belongs to the RuvB family.</text>
</comment>
<keyword id="KW-0067">ATP-binding</keyword>
<keyword id="KW-0963">Cytoplasm</keyword>
<keyword id="KW-0227">DNA damage</keyword>
<keyword id="KW-0233">DNA recombination</keyword>
<keyword id="KW-0234">DNA repair</keyword>
<keyword id="KW-0238">DNA-binding</keyword>
<keyword id="KW-0378">Hydrolase</keyword>
<keyword id="KW-0547">Nucleotide-binding</keyword>
<organism>
    <name type="scientific">Acinetobacter baumannii (strain AYE)</name>
    <dbReference type="NCBI Taxonomy" id="509173"/>
    <lineage>
        <taxon>Bacteria</taxon>
        <taxon>Pseudomonadati</taxon>
        <taxon>Pseudomonadota</taxon>
        <taxon>Gammaproteobacteria</taxon>
        <taxon>Moraxellales</taxon>
        <taxon>Moraxellaceae</taxon>
        <taxon>Acinetobacter</taxon>
        <taxon>Acinetobacter calcoaceticus/baumannii complex</taxon>
    </lineage>
</organism>
<protein>
    <recommendedName>
        <fullName evidence="1">Holliday junction branch migration complex subunit RuvB</fullName>
        <ecNumber evidence="1">3.6.4.-</ecNumber>
    </recommendedName>
</protein>
<accession>B0VDI5</accession>
<sequence>MQDRLISGTEKPEDHFDRAIRPTSLADYIGQPVVREQMEIFIGAARGRGEALDHTLIFGPPGLGKTTLANIIAREMGGNLKSTSGPVLERAGDLAAMLTNLEEGDVLFIDEIHRLSPVIEEILYPAMEDYQLDIMIGEGPAARSIKLDLPPFTLVAATTRAGLLTSPLRDRFGIVQRLEFYSVEDLTHIVSRSANLMDVPITVEGAEEVARRSRGTPRIANRLLRRVRDYAQVKGTGEVNHEMAQRALDMLNVDKAGLDTLDRRYLSMLLERFDGGPAGVEALAAAMAEDSGTLEDVIEPYLIQQGYVMRTARGRIATNQSYLQFGMTPPEPKN</sequence>
<reference key="1">
    <citation type="journal article" date="2008" name="PLoS ONE">
        <title>Comparative analysis of Acinetobacters: three genomes for three lifestyles.</title>
        <authorList>
            <person name="Vallenet D."/>
            <person name="Nordmann P."/>
            <person name="Barbe V."/>
            <person name="Poirel L."/>
            <person name="Mangenot S."/>
            <person name="Bataille E."/>
            <person name="Dossat C."/>
            <person name="Gas S."/>
            <person name="Kreimeyer A."/>
            <person name="Lenoble P."/>
            <person name="Oztas S."/>
            <person name="Poulain J."/>
            <person name="Segurens B."/>
            <person name="Robert C."/>
            <person name="Abergel C."/>
            <person name="Claverie J.-M."/>
            <person name="Raoult D."/>
            <person name="Medigue C."/>
            <person name="Weissenbach J."/>
            <person name="Cruveiller S."/>
        </authorList>
    </citation>
    <scope>NUCLEOTIDE SEQUENCE [LARGE SCALE GENOMIC DNA]</scope>
    <source>
        <strain>AYE</strain>
    </source>
</reference>
<evidence type="ECO:0000255" key="1">
    <source>
        <dbReference type="HAMAP-Rule" id="MF_00016"/>
    </source>
</evidence>
<proteinExistence type="inferred from homology"/>
<name>RUVB_ACIBY</name>
<gene>
    <name evidence="1" type="primary">ruvB</name>
    <name type="ordered locus">ABAYE0909</name>
</gene>